<comment type="function">
    <text>Calcium-regulated non-lysosomal thiol-protease which catalyze limited proteolysis of substrates involved in cytoskeletal remodeling and signal transduction.</text>
</comment>
<comment type="catalytic activity">
    <reaction>
        <text>Broad endopeptidase specificity.</text>
        <dbReference type="EC" id="3.4.22.52"/>
    </reaction>
</comment>
<comment type="cofactor">
    <cofactor>
        <name>Ca(2+)</name>
        <dbReference type="ChEBI" id="CHEBI:29108"/>
    </cofactor>
    <text>Binds 3 Ca(2+) ions.</text>
</comment>
<comment type="activity regulation">
    <text>Activated by micromolar concentrations of calcium and inhibited by calpastatin.</text>
</comment>
<comment type="subunit">
    <text>Heterodimer of large (catalytic) and a small (regulatory) subunit.</text>
</comment>
<comment type="subcellular location">
    <subcellularLocation>
        <location evidence="1">Cytoplasm</location>
    </subcellularLocation>
    <subcellularLocation>
        <location evidence="1">Cell membrane</location>
    </subcellularLocation>
    <text evidence="1">Translocates to the plasma membrane upon Ca(2+) binding.</text>
</comment>
<comment type="tissue specificity">
    <text>Ubiquitously expressed.</text>
</comment>
<comment type="PTM">
    <text>The N-terminus is blocked.</text>
</comment>
<comment type="similarity">
    <text evidence="5">Belongs to the peptidase C2 family.</text>
</comment>
<comment type="caution">
    <text evidence="5">This protein was previously thought to be M-calpain but has since been found to be an intermediate form between the M and Mu types.</text>
</comment>
<reference key="1">
    <citation type="journal article" date="1984" name="Nature">
        <title>Evolutionary origin of a calcium-dependent protease by fusion of genes for a thiol protease and a calcium-binding protein?</title>
        <authorList>
            <person name="Ohno S."/>
            <person name="Emori Y."/>
            <person name="Imajoh S."/>
            <person name="Kawasaki H."/>
            <person name="Kisaragi M."/>
            <person name="Suzuki K."/>
        </authorList>
    </citation>
    <scope>NUCLEOTIDE SEQUENCE [MRNA]</scope>
</reference>
<reference key="2">
    <citation type="journal article" date="1986" name="FEBS Lett.">
        <title>Gene structure of calcium-dependent protease retains the ancestral organization of the calcium-binding protein gene.</title>
        <authorList>
            <person name="Emori Y."/>
            <person name="Ohno S."/>
            <person name="Tobita M."/>
            <person name="Suzuki K."/>
        </authorList>
    </citation>
    <scope>NUCLEOTIDE SEQUENCE [MRNA]</scope>
</reference>
<reference key="3">
    <citation type="journal article" date="1987" name="J. Biochem.">
        <title>E-F hand structure-domain of calcium-activated neutral protease (CANP) can bind Ca2+ ions.</title>
        <authorList>
            <person name="Minami Y."/>
            <person name="Emori Y."/>
            <person name="Kawasaki H."/>
            <person name="Suzuki K."/>
        </authorList>
    </citation>
    <scope>CALCIUM-BINDING DATA</scope>
</reference>
<reference key="4">
    <citation type="journal article" date="1995" name="Biochim. Biophys. Acta">
        <title>Identification of a third ubiquitous calpain species -- chicken muscle expresses four distinct calpains.</title>
        <authorList>
            <person name="Sorimachi H."/>
            <person name="Tsukahara T."/>
            <person name="Okada-Ban M."/>
            <person name="Sugita H."/>
            <person name="Ishiura S."/>
            <person name="Suzuki K."/>
        </authorList>
    </citation>
    <scope>CHARACTERIZATION</scope>
</reference>
<feature type="chain" id="PRO_0000207701" description="Calpain-1 catalytic subunit">
    <location>
        <begin position="1"/>
        <end position="705"/>
    </location>
</feature>
<feature type="domain" description="Calpain catalytic" evidence="2">
    <location>
        <begin position="48"/>
        <end position="347"/>
    </location>
</feature>
<feature type="domain" description="EF-hand 1" evidence="5">
    <location>
        <begin position="530"/>
        <end position="565"/>
    </location>
</feature>
<feature type="domain" description="EF-hand 2" evidence="3">
    <location>
        <begin position="606"/>
        <end position="641"/>
    </location>
</feature>
<feature type="domain" description="EF-hand 3" evidence="3">
    <location>
        <begin position="671"/>
        <end position="705"/>
    </location>
</feature>
<feature type="region of interest" description="Domain III">
    <location>
        <begin position="348"/>
        <end position="517"/>
    </location>
</feature>
<feature type="region of interest" description="Linker">
    <location>
        <begin position="518"/>
        <end position="533"/>
    </location>
</feature>
<feature type="region of interest" description="Domain IV">
    <location>
        <begin position="534"/>
        <end position="704"/>
    </location>
</feature>
<feature type="active site" evidence="1">
    <location>
        <position position="108"/>
    </location>
</feature>
<feature type="active site" evidence="1">
    <location>
        <position position="265"/>
    </location>
</feature>
<feature type="active site" evidence="1">
    <location>
        <position position="289"/>
    </location>
</feature>
<feature type="binding site" evidence="4 5">
    <location>
        <position position="549"/>
    </location>
    <ligand>
        <name>Ca(2+)</name>
        <dbReference type="ChEBI" id="CHEBI:29108"/>
        <label>1</label>
    </ligand>
</feature>
<feature type="binding site" evidence="4 5">
    <location>
        <position position="551"/>
    </location>
    <ligand>
        <name>Ca(2+)</name>
        <dbReference type="ChEBI" id="CHEBI:29108"/>
        <label>1</label>
    </ligand>
</feature>
<feature type="binding site" evidence="4 5">
    <location>
        <position position="556"/>
    </location>
    <ligand>
        <name>Ca(2+)</name>
        <dbReference type="ChEBI" id="CHEBI:29108"/>
        <label>1</label>
    </ligand>
</feature>
<feature type="binding site" evidence="4 5">
    <location>
        <position position="589"/>
    </location>
    <ligand>
        <name>Ca(2+)</name>
        <dbReference type="ChEBI" id="CHEBI:29108"/>
        <label>2</label>
    </ligand>
</feature>
<feature type="binding site" evidence="4 5">
    <location>
        <position position="591"/>
    </location>
    <ligand>
        <name>Ca(2+)</name>
        <dbReference type="ChEBI" id="CHEBI:29108"/>
        <label>2</label>
    </ligand>
</feature>
<feature type="binding site" evidence="4 5">
    <location>
        <position position="593"/>
    </location>
    <ligand>
        <name>Ca(2+)</name>
        <dbReference type="ChEBI" id="CHEBI:29108"/>
        <label>2</label>
    </ligand>
</feature>
<feature type="binding site" evidence="4 5">
    <location>
        <position position="595"/>
    </location>
    <ligand>
        <name>Ca(2+)</name>
        <dbReference type="ChEBI" id="CHEBI:29108"/>
        <label>2</label>
    </ligand>
</feature>
<feature type="binding site" evidence="4 5">
    <location>
        <position position="600"/>
    </location>
    <ligand>
        <name>Ca(2+)</name>
        <dbReference type="ChEBI" id="CHEBI:29108"/>
        <label>2</label>
    </ligand>
</feature>
<feature type="binding site" evidence="3 4">
    <location>
        <position position="619"/>
    </location>
    <ligand>
        <name>Ca(2+)</name>
        <dbReference type="ChEBI" id="CHEBI:29108"/>
        <label>3</label>
    </ligand>
</feature>
<feature type="binding site" evidence="3 4">
    <location>
        <position position="621"/>
    </location>
    <ligand>
        <name>Ca(2+)</name>
        <dbReference type="ChEBI" id="CHEBI:29108"/>
        <label>3</label>
    </ligand>
</feature>
<feature type="binding site" evidence="3 4">
    <location>
        <position position="623"/>
    </location>
    <ligand>
        <name>Ca(2+)</name>
        <dbReference type="ChEBI" id="CHEBI:29108"/>
        <label>3</label>
    </ligand>
</feature>
<feature type="binding site" evidence="3 4">
    <location>
        <position position="625"/>
    </location>
    <ligand>
        <name>Ca(2+)</name>
        <dbReference type="ChEBI" id="CHEBI:29108"/>
        <label>3</label>
    </ligand>
</feature>
<feature type="binding site" evidence="3 4">
    <location>
        <position position="630"/>
    </location>
    <ligand>
        <name>Ca(2+)</name>
        <dbReference type="ChEBI" id="CHEBI:29108"/>
        <label>3</label>
    </ligand>
</feature>
<evidence type="ECO:0000250" key="1"/>
<evidence type="ECO:0000255" key="2">
    <source>
        <dbReference type="PROSITE-ProRule" id="PRU00239"/>
    </source>
</evidence>
<evidence type="ECO:0000255" key="3">
    <source>
        <dbReference type="PROSITE-ProRule" id="PRU00448"/>
    </source>
</evidence>
<evidence type="ECO:0000269" key="4">
    <source>
    </source>
</evidence>
<evidence type="ECO:0000305" key="5"/>
<dbReference type="EC" id="3.4.22.52"/>
<dbReference type="EMBL" id="X01415">
    <property type="protein sequence ID" value="CAA25658.1"/>
    <property type="molecule type" value="mRNA"/>
</dbReference>
<dbReference type="PIR" id="A00979">
    <property type="entry name" value="CICHH"/>
</dbReference>
<dbReference type="RefSeq" id="NP_990634.1">
    <property type="nucleotide sequence ID" value="NM_205303.1"/>
</dbReference>
<dbReference type="RefSeq" id="XP_015139111.1">
    <property type="nucleotide sequence ID" value="XM_015283625.4"/>
</dbReference>
<dbReference type="RefSeq" id="XP_040552800.1">
    <property type="nucleotide sequence ID" value="XM_040696866.2"/>
</dbReference>
<dbReference type="RefSeq" id="XP_040552801.1">
    <property type="nucleotide sequence ID" value="XM_040696867.2"/>
</dbReference>
<dbReference type="RefSeq" id="XP_046769182.1">
    <property type="nucleotide sequence ID" value="XM_046913226.1"/>
</dbReference>
<dbReference type="RefSeq" id="XP_046769183.1">
    <property type="nucleotide sequence ID" value="XM_046913227.1"/>
</dbReference>
<dbReference type="RefSeq" id="XP_046769184.1">
    <property type="nucleotide sequence ID" value="XM_046913228.1"/>
</dbReference>
<dbReference type="RefSeq" id="XP_046769185.1">
    <property type="nucleotide sequence ID" value="XM_046913229.1"/>
</dbReference>
<dbReference type="SMR" id="P00789"/>
<dbReference type="FunCoup" id="P00789">
    <property type="interactions" value="84"/>
</dbReference>
<dbReference type="STRING" id="9031.ENSGALP00000052109"/>
<dbReference type="BindingDB" id="P00789"/>
<dbReference type="ChEMBL" id="CHEMBL3147"/>
<dbReference type="MEROPS" id="C02.003"/>
<dbReference type="PaxDb" id="9031-ENSGALP00000016538"/>
<dbReference type="Ensembl" id="ENSGALT00010047386.1">
    <property type="protein sequence ID" value="ENSGALP00010028077.1"/>
    <property type="gene ID" value="ENSGALG00010019641.1"/>
</dbReference>
<dbReference type="GeneID" id="396240"/>
<dbReference type="KEGG" id="gga:396240"/>
<dbReference type="CTD" id="11131"/>
<dbReference type="VEuPathDB" id="HostDB:geneid_396240"/>
<dbReference type="eggNOG" id="KOG0045">
    <property type="taxonomic scope" value="Eukaryota"/>
</dbReference>
<dbReference type="GeneTree" id="ENSGT00940000158672"/>
<dbReference type="HOGENOM" id="CLU_010982_0_1_1"/>
<dbReference type="InParanoid" id="P00789"/>
<dbReference type="OMA" id="RMKGLFD"/>
<dbReference type="OrthoDB" id="424753at2759"/>
<dbReference type="PhylomeDB" id="P00789"/>
<dbReference type="TreeFam" id="TF314748"/>
<dbReference type="BRENDA" id="3.4.22.52">
    <property type="organism ID" value="1306"/>
</dbReference>
<dbReference type="PRO" id="PR:P00789"/>
<dbReference type="Proteomes" id="UP000000539">
    <property type="component" value="Chromosome 3"/>
</dbReference>
<dbReference type="Bgee" id="ENSGALG00000010186">
    <property type="expression patterns" value="Expressed in lung and 12 other cell types or tissues"/>
</dbReference>
<dbReference type="GO" id="GO:0001669">
    <property type="term" value="C:acrosomal vesicle"/>
    <property type="evidence" value="ECO:0007669"/>
    <property type="project" value="Ensembl"/>
</dbReference>
<dbReference type="GO" id="GO:0005737">
    <property type="term" value="C:cytoplasm"/>
    <property type="evidence" value="ECO:0000318"/>
    <property type="project" value="GO_Central"/>
</dbReference>
<dbReference type="GO" id="GO:0005886">
    <property type="term" value="C:plasma membrane"/>
    <property type="evidence" value="ECO:0007669"/>
    <property type="project" value="UniProtKB-SubCell"/>
</dbReference>
<dbReference type="GO" id="GO:0005509">
    <property type="term" value="F:calcium ion binding"/>
    <property type="evidence" value="ECO:0007669"/>
    <property type="project" value="InterPro"/>
</dbReference>
<dbReference type="GO" id="GO:0004198">
    <property type="term" value="F:calcium-dependent cysteine-type endopeptidase activity"/>
    <property type="evidence" value="ECO:0000318"/>
    <property type="project" value="GO_Central"/>
</dbReference>
<dbReference type="GO" id="GO:0006508">
    <property type="term" value="P:proteolysis"/>
    <property type="evidence" value="ECO:0000318"/>
    <property type="project" value="GO_Central"/>
</dbReference>
<dbReference type="CDD" id="cd00214">
    <property type="entry name" value="Calpain_III"/>
    <property type="match status" value="1"/>
</dbReference>
<dbReference type="CDD" id="cd00044">
    <property type="entry name" value="CysPc"/>
    <property type="match status" value="1"/>
</dbReference>
<dbReference type="CDD" id="cd16198">
    <property type="entry name" value="EFh_PEF_CAPN1"/>
    <property type="match status" value="1"/>
</dbReference>
<dbReference type="FunFam" id="1.10.238.10:FF:000124">
    <property type="entry name" value="Calpain-1 catalytic subunit"/>
    <property type="match status" value="1"/>
</dbReference>
<dbReference type="FunFam" id="2.60.120.380:FF:000001">
    <property type="entry name" value="Calpain-1 catalytic subunit"/>
    <property type="match status" value="1"/>
</dbReference>
<dbReference type="FunFam" id="3.90.70.10:FF:000001">
    <property type="entry name" value="Calpain-1 catalytic subunit"/>
    <property type="match status" value="1"/>
</dbReference>
<dbReference type="Gene3D" id="2.60.120.380">
    <property type="match status" value="1"/>
</dbReference>
<dbReference type="Gene3D" id="3.90.70.10">
    <property type="entry name" value="Cysteine proteinases"/>
    <property type="match status" value="1"/>
</dbReference>
<dbReference type="Gene3D" id="1.10.238.10">
    <property type="entry name" value="EF-hand"/>
    <property type="match status" value="1"/>
</dbReference>
<dbReference type="InterPro" id="IPR033883">
    <property type="entry name" value="C2_III"/>
</dbReference>
<dbReference type="InterPro" id="IPR022684">
    <property type="entry name" value="Calpain_cysteine_protease"/>
</dbReference>
<dbReference type="InterPro" id="IPR022682">
    <property type="entry name" value="Calpain_domain_III"/>
</dbReference>
<dbReference type="InterPro" id="IPR022683">
    <property type="entry name" value="Calpain_III"/>
</dbReference>
<dbReference type="InterPro" id="IPR036213">
    <property type="entry name" value="Calpain_III_sf"/>
</dbReference>
<dbReference type="InterPro" id="IPR011992">
    <property type="entry name" value="EF-hand-dom_pair"/>
</dbReference>
<dbReference type="InterPro" id="IPR018247">
    <property type="entry name" value="EF_Hand_1_Ca_BS"/>
</dbReference>
<dbReference type="InterPro" id="IPR002048">
    <property type="entry name" value="EF_hand_dom"/>
</dbReference>
<dbReference type="InterPro" id="IPR038765">
    <property type="entry name" value="Papain-like_cys_pep_sf"/>
</dbReference>
<dbReference type="InterPro" id="IPR000169">
    <property type="entry name" value="Pept_cys_AS"/>
</dbReference>
<dbReference type="InterPro" id="IPR001300">
    <property type="entry name" value="Peptidase_C2_calpain_cat"/>
</dbReference>
<dbReference type="PANTHER" id="PTHR10183">
    <property type="entry name" value="CALPAIN"/>
    <property type="match status" value="1"/>
</dbReference>
<dbReference type="PANTHER" id="PTHR10183:SF322">
    <property type="entry name" value="CALPAIN-11"/>
    <property type="match status" value="1"/>
</dbReference>
<dbReference type="Pfam" id="PF01067">
    <property type="entry name" value="Calpain_III"/>
    <property type="match status" value="1"/>
</dbReference>
<dbReference type="Pfam" id="PF00648">
    <property type="entry name" value="Peptidase_C2"/>
    <property type="match status" value="1"/>
</dbReference>
<dbReference type="PRINTS" id="PR00704">
    <property type="entry name" value="CALPAIN"/>
</dbReference>
<dbReference type="SMART" id="SM00720">
    <property type="entry name" value="calpain_III"/>
    <property type="match status" value="1"/>
</dbReference>
<dbReference type="SMART" id="SM00230">
    <property type="entry name" value="CysPc"/>
    <property type="match status" value="1"/>
</dbReference>
<dbReference type="SUPFAM" id="SSF49758">
    <property type="entry name" value="Calpain large subunit, middle domain (domain III)"/>
    <property type="match status" value="1"/>
</dbReference>
<dbReference type="SUPFAM" id="SSF54001">
    <property type="entry name" value="Cysteine proteinases"/>
    <property type="match status" value="1"/>
</dbReference>
<dbReference type="SUPFAM" id="SSF47473">
    <property type="entry name" value="EF-hand"/>
    <property type="match status" value="1"/>
</dbReference>
<dbReference type="PROSITE" id="PS50203">
    <property type="entry name" value="CALPAIN_CAT"/>
    <property type="match status" value="1"/>
</dbReference>
<dbReference type="PROSITE" id="PS00018">
    <property type="entry name" value="EF_HAND_1"/>
    <property type="match status" value="1"/>
</dbReference>
<dbReference type="PROSITE" id="PS50222">
    <property type="entry name" value="EF_HAND_2"/>
    <property type="match status" value="2"/>
</dbReference>
<dbReference type="PROSITE" id="PS00139">
    <property type="entry name" value="THIOL_PROTEASE_CYS"/>
    <property type="match status" value="1"/>
</dbReference>
<proteinExistence type="evidence at protein level"/>
<accession>P00789</accession>
<sequence length="705" mass="80352">MMPFGGIAARLQRDRLRAEGVGEHNNAVKYLNQDYEALKQECIESGTLFRDPQFPAGPTALGFKELGPYSSKTRGVEWKRPSELVDDPQFIVGGATRTDICQGALGDCWLLAAIGSLTLNEELLHRVVPHGQSFQEDYAGIFHFQIWQFGEWVDVVVDDLLPTKDGELLFVHSAECTEFWSALLEKAYAKLNGCYESLSGGSTTEGFEDFTGGVAEMYDLKRAPRNMGHIIRKALERGSLLGCSIDITSAFDMEAVTFKKLVKGHAYSVTAFKDVNYRGQQEQLIRIRNPWGQVEWTGAWSDGSSEWDNIDPSDREELQLKMEDGEFWMSFRDFMREFSRLEICNLTPDALTKDELSRWHTQVFEGTWRRGSTAGGCRNNPATFWINPQFKIKLLEEDDDPGDDEVACSFLVALMQKHRRRERRVGGDMHTIGFAVYEVPEEAQGSQNVHLKKDFFLRNQSRARSETFINLREVSNQIRLPPGEYIVVPSTFEPHKEADFILRVFTEKQSDTAELDEEISADLADEEEITEDDIEDGFKNMFQQLAGEDMEISVFELKTILNRVIARHKDLKTDGFSLDSCRNMVNLMDKDGSARLGLVEFQILWNKIRSWLTIFRQYDLDKSGTMSSYEMRMALESAGFKLNNKLHQVVVARYADAETGVDFDNFVCCLVKLETMFRFFHSMDRDGTGTAVMNLAEWLLLTMCG</sequence>
<organism>
    <name type="scientific">Gallus gallus</name>
    <name type="common">Chicken</name>
    <dbReference type="NCBI Taxonomy" id="9031"/>
    <lineage>
        <taxon>Eukaryota</taxon>
        <taxon>Metazoa</taxon>
        <taxon>Chordata</taxon>
        <taxon>Craniata</taxon>
        <taxon>Vertebrata</taxon>
        <taxon>Euteleostomi</taxon>
        <taxon>Archelosauria</taxon>
        <taxon>Archosauria</taxon>
        <taxon>Dinosauria</taxon>
        <taxon>Saurischia</taxon>
        <taxon>Theropoda</taxon>
        <taxon>Coelurosauria</taxon>
        <taxon>Aves</taxon>
        <taxon>Neognathae</taxon>
        <taxon>Galloanserae</taxon>
        <taxon>Galliformes</taxon>
        <taxon>Phasianidae</taxon>
        <taxon>Phasianinae</taxon>
        <taxon>Gallus</taxon>
    </lineage>
</organism>
<keyword id="KW-0106">Calcium</keyword>
<keyword id="KW-1003">Cell membrane</keyword>
<keyword id="KW-0963">Cytoplasm</keyword>
<keyword id="KW-0378">Hydrolase</keyword>
<keyword id="KW-0472">Membrane</keyword>
<keyword id="KW-0479">Metal-binding</keyword>
<keyword id="KW-0645">Protease</keyword>
<keyword id="KW-1185">Reference proteome</keyword>
<keyword id="KW-0677">Repeat</keyword>
<keyword id="KW-0788">Thiol protease</keyword>
<protein>
    <recommendedName>
        <fullName>Calpain-1 catalytic subunit</fullName>
        <ecNumber>3.4.22.52</ecNumber>
    </recommendedName>
    <alternativeName>
        <fullName>Calcium-activated neutral proteinase</fullName>
        <shortName>CANP</shortName>
    </alternativeName>
    <alternativeName>
        <fullName>Calpain-1 large subunit</fullName>
    </alternativeName>
    <alternativeName>
        <fullName>Mu/M-type</fullName>
    </alternativeName>
</protein>
<name>CANX_CHICK</name>